<organism>
    <name type="scientific">Danio rerio</name>
    <name type="common">Zebrafish</name>
    <name type="synonym">Brachydanio rerio</name>
    <dbReference type="NCBI Taxonomy" id="7955"/>
    <lineage>
        <taxon>Eukaryota</taxon>
        <taxon>Metazoa</taxon>
        <taxon>Chordata</taxon>
        <taxon>Craniata</taxon>
        <taxon>Vertebrata</taxon>
        <taxon>Euteleostomi</taxon>
        <taxon>Actinopterygii</taxon>
        <taxon>Neopterygii</taxon>
        <taxon>Teleostei</taxon>
        <taxon>Ostariophysi</taxon>
        <taxon>Cypriniformes</taxon>
        <taxon>Danionidae</taxon>
        <taxon>Danioninae</taxon>
        <taxon>Danio</taxon>
    </lineage>
</organism>
<keyword id="KW-0010">Activator</keyword>
<keyword id="KW-0217">Developmental protein</keyword>
<keyword id="KW-0238">DNA-binding</keyword>
<keyword id="KW-0539">Nucleus</keyword>
<keyword id="KW-1185">Reference proteome</keyword>
<keyword id="KW-0678">Repressor</keyword>
<keyword id="KW-0804">Transcription</keyword>
<keyword id="KW-0805">Transcription regulation</keyword>
<keyword id="KW-0879">Wnt signaling pathway</keyword>
<proteinExistence type="evidence at transcript level"/>
<evidence type="ECO:0000250" key="1"/>
<evidence type="ECO:0000255" key="2">
    <source>
        <dbReference type="PROSITE-ProRule" id="PRU00267"/>
    </source>
</evidence>
<evidence type="ECO:0000256" key="3">
    <source>
        <dbReference type="SAM" id="MobiDB-lite"/>
    </source>
</evidence>
<evidence type="ECO:0000269" key="4">
    <source>
    </source>
</evidence>
<evidence type="ECO:0000269" key="5">
    <source>
    </source>
</evidence>
<evidence type="ECO:0000269" key="6">
    <source>
    </source>
</evidence>
<evidence type="ECO:0000269" key="7">
    <source>
    </source>
</evidence>
<evidence type="ECO:0000305" key="8"/>
<protein>
    <recommendedName>
        <fullName>Transcription factor 7-like 1-B</fullName>
    </recommendedName>
    <alternativeName>
        <fullName>HMG box transcription factor 3-B</fullName>
        <shortName>TCF-3-B</shortName>
    </alternativeName>
</protein>
<reference key="1">
    <citation type="journal article" date="2003" name="Development">
        <title>Two tcf3 genes cooperate to pattern the zebrafish brain.</title>
        <authorList>
            <person name="Dorsky R.I."/>
            <person name="Itoh M."/>
            <person name="Moon R.T."/>
            <person name="Chitnis A."/>
        </authorList>
    </citation>
    <scope>NUCLEOTIDE SEQUENCE [MRNA]</scope>
    <scope>FUNCTION</scope>
    <scope>DEVELOPMENTAL STAGE</scope>
</reference>
<reference key="2">
    <citation type="journal article" date="2004" name="Development">
        <title>nemo-like kinase is an essential co-activator of Wnt signaling during early zebrafish development.</title>
        <authorList>
            <person name="Thorpe C.J."/>
            <person name="Moon R.T."/>
        </authorList>
    </citation>
    <scope>FUNCTION</scope>
</reference>
<reference key="3">
    <citation type="journal article" date="2004" name="Dev. Dyn.">
        <title>Rhombomere boundaries are Wnt signaling centers that regulate metameric patterning in the zebrafish hindbrain.</title>
        <authorList>
            <person name="Riley B.B."/>
            <person name="Chiang M.-Y."/>
            <person name="Storch E.M."/>
            <person name="Heck R."/>
            <person name="Buckles G.R."/>
            <person name="Lekven A.C."/>
        </authorList>
    </citation>
    <scope>FUNCTION</scope>
</reference>
<reference key="4">
    <citation type="journal article" date="2005" name="Development">
        <title>Wnt1 regulates neurogenesis and mediates lateral inhibition of boundary cell specification in the zebrafish hindbrain.</title>
        <authorList>
            <person name="Amoyel M."/>
            <person name="Cheng Y.-C."/>
            <person name="Jiang Y.-J."/>
            <person name="Wilkinson D.G."/>
        </authorList>
    </citation>
    <scope>FUNCTION</scope>
</reference>
<comment type="function">
    <text evidence="4 5 6 7">Participates in the Wnt signaling pathway. Probably binds to DNA and acts as a repressor in the absence of ctnnb1, and possibly as an activator in its presence. Regulates anterior-posterior patterning in the neuroectoderm by repressing posterior neural fates. Also required for hindbrain morphogenesis.</text>
</comment>
<comment type="subunit">
    <text evidence="1">Interacts with ctnnb1.</text>
</comment>
<comment type="subcellular location">
    <subcellularLocation>
        <location evidence="2">Nucleus</location>
    </subcellularLocation>
</comment>
<comment type="developmental stage">
    <text evidence="4">Expressed maternally and throughout embryogenesis. Expressed in the rostral neuroectoderm and at low levels in the notochord following gastrulation. Expressed throughout the developing brain during somitogenesis.</text>
</comment>
<comment type="similarity">
    <text evidence="8">Belongs to the TCF/LEF family.</text>
</comment>
<feature type="chain" id="PRO_0000048622" description="Transcription factor 7-like 1-B">
    <location>
        <begin position="1"/>
        <end position="551"/>
    </location>
</feature>
<feature type="DNA-binding region" description="HMG box" evidence="2">
    <location>
        <begin position="326"/>
        <end position="394"/>
    </location>
</feature>
<feature type="region of interest" description="Disordered" evidence="3">
    <location>
        <begin position="1"/>
        <end position="76"/>
    </location>
</feature>
<feature type="region of interest" description="Disordered" evidence="3">
    <location>
        <begin position="298"/>
        <end position="326"/>
    </location>
</feature>
<feature type="region of interest" description="Disordered" evidence="3">
    <location>
        <begin position="392"/>
        <end position="525"/>
    </location>
</feature>
<feature type="compositionally biased region" description="Gly residues" evidence="3">
    <location>
        <begin position="1"/>
        <end position="11"/>
    </location>
</feature>
<feature type="compositionally biased region" description="Basic and acidic residues" evidence="3">
    <location>
        <begin position="19"/>
        <end position="32"/>
    </location>
</feature>
<feature type="compositionally biased region" description="Low complexity" evidence="3">
    <location>
        <begin position="46"/>
        <end position="61"/>
    </location>
</feature>
<feature type="compositionally biased region" description="Basic and acidic residues" evidence="3">
    <location>
        <begin position="63"/>
        <end position="76"/>
    </location>
</feature>
<feature type="compositionally biased region" description="Low complexity" evidence="3">
    <location>
        <begin position="449"/>
        <end position="468"/>
    </location>
</feature>
<feature type="compositionally biased region" description="Polar residues" evidence="3">
    <location>
        <begin position="469"/>
        <end position="478"/>
    </location>
</feature>
<feature type="compositionally biased region" description="Low complexity" evidence="3">
    <location>
        <begin position="493"/>
        <end position="505"/>
    </location>
</feature>
<dbReference type="EMBL" id="AY221031">
    <property type="protein sequence ID" value="AAO65958.1"/>
    <property type="molecule type" value="mRNA"/>
</dbReference>
<dbReference type="SMR" id="Q800Q5"/>
<dbReference type="FunCoup" id="Q800Q5">
    <property type="interactions" value="785"/>
</dbReference>
<dbReference type="STRING" id="7955.ENSDARP00000148053"/>
<dbReference type="PaxDb" id="7955-ENSDARP00000051824"/>
<dbReference type="AGR" id="ZFIN:ZDB-GENE-991110-10"/>
<dbReference type="ZFIN" id="ZDB-GENE-991110-10">
    <property type="gene designation" value="tcf7l1b"/>
</dbReference>
<dbReference type="eggNOG" id="KOG3248">
    <property type="taxonomic scope" value="Eukaryota"/>
</dbReference>
<dbReference type="InParanoid" id="Q800Q5"/>
<dbReference type="PhylomeDB" id="Q800Q5"/>
<dbReference type="PRO" id="PR:Q800Q5"/>
<dbReference type="Proteomes" id="UP000000437">
    <property type="component" value="Unplaced"/>
</dbReference>
<dbReference type="GO" id="GO:1990907">
    <property type="term" value="C:beta-catenin-TCF complex"/>
    <property type="evidence" value="ECO:0000318"/>
    <property type="project" value="GO_Central"/>
</dbReference>
<dbReference type="GO" id="GO:0000785">
    <property type="term" value="C:chromatin"/>
    <property type="evidence" value="ECO:0000318"/>
    <property type="project" value="GO_Central"/>
</dbReference>
<dbReference type="GO" id="GO:0000981">
    <property type="term" value="F:DNA-binding transcription factor activity, RNA polymerase II-specific"/>
    <property type="evidence" value="ECO:0000318"/>
    <property type="project" value="GO_Central"/>
</dbReference>
<dbReference type="GO" id="GO:0000978">
    <property type="term" value="F:RNA polymerase II cis-regulatory region sequence-specific DNA binding"/>
    <property type="evidence" value="ECO:0000318"/>
    <property type="project" value="GO_Central"/>
</dbReference>
<dbReference type="GO" id="GO:0035284">
    <property type="term" value="P:brain segmentation"/>
    <property type="evidence" value="ECO:0000315"/>
    <property type="project" value="ZFIN"/>
</dbReference>
<dbReference type="GO" id="GO:0060070">
    <property type="term" value="P:canonical Wnt signaling pathway"/>
    <property type="evidence" value="ECO:0000318"/>
    <property type="project" value="GO_Central"/>
</dbReference>
<dbReference type="GO" id="GO:0010456">
    <property type="term" value="P:cell proliferation in dorsal spinal cord"/>
    <property type="evidence" value="ECO:0000316"/>
    <property type="project" value="ZFIN"/>
</dbReference>
<dbReference type="GO" id="GO:0009880">
    <property type="term" value="P:embryonic pattern specification"/>
    <property type="evidence" value="ECO:0000315"/>
    <property type="project" value="ZFIN"/>
</dbReference>
<dbReference type="GO" id="GO:0060847">
    <property type="term" value="P:endothelial cell fate specification"/>
    <property type="evidence" value="ECO:0000315"/>
    <property type="project" value="ZFIN"/>
</dbReference>
<dbReference type="GO" id="GO:0048699">
    <property type="term" value="P:generation of neurons"/>
    <property type="evidence" value="ECO:0000316"/>
    <property type="project" value="ZFIN"/>
</dbReference>
<dbReference type="GO" id="GO:0007507">
    <property type="term" value="P:heart development"/>
    <property type="evidence" value="ECO:0000315"/>
    <property type="project" value="ZFIN"/>
</dbReference>
<dbReference type="GO" id="GO:0030902">
    <property type="term" value="P:hindbrain development"/>
    <property type="evidence" value="ECO:0000315"/>
    <property type="project" value="ZFIN"/>
</dbReference>
<dbReference type="GO" id="GO:0030901">
    <property type="term" value="P:midbrain development"/>
    <property type="evidence" value="ECO:0000315"/>
    <property type="project" value="ZFIN"/>
</dbReference>
<dbReference type="GO" id="GO:0008284">
    <property type="term" value="P:positive regulation of cell population proliferation"/>
    <property type="evidence" value="ECO:0000316"/>
    <property type="project" value="ZFIN"/>
</dbReference>
<dbReference type="GO" id="GO:0006357">
    <property type="term" value="P:regulation of transcription by RNA polymerase II"/>
    <property type="evidence" value="ECO:0000316"/>
    <property type="project" value="ZFIN"/>
</dbReference>
<dbReference type="GO" id="GO:0021903">
    <property type="term" value="P:rostrocaudal neural tube patterning"/>
    <property type="evidence" value="ECO:0000315"/>
    <property type="project" value="ZFIN"/>
</dbReference>
<dbReference type="CDD" id="cd21996">
    <property type="entry name" value="HMG-box_TCF7-like"/>
    <property type="match status" value="1"/>
</dbReference>
<dbReference type="FunFam" id="1.10.30.10:FF:000001">
    <property type="entry name" value="transcription factor 7 isoform X2"/>
    <property type="match status" value="1"/>
</dbReference>
<dbReference type="FunFam" id="4.10.900.10:FF:000002">
    <property type="entry name" value="transcription factor 7-like 2 isoform X1"/>
    <property type="match status" value="1"/>
</dbReference>
<dbReference type="Gene3D" id="1.10.30.10">
    <property type="entry name" value="High mobility group box domain"/>
    <property type="match status" value="1"/>
</dbReference>
<dbReference type="Gene3D" id="4.10.900.10">
    <property type="entry name" value="TCF3-CBD (Catenin binding domain)"/>
    <property type="match status" value="1"/>
</dbReference>
<dbReference type="InterPro" id="IPR027397">
    <property type="entry name" value="Catenin-bd_sf"/>
</dbReference>
<dbReference type="InterPro" id="IPR013558">
    <property type="entry name" value="CTNNB1-bd_N"/>
</dbReference>
<dbReference type="InterPro" id="IPR009071">
    <property type="entry name" value="HMG_box_dom"/>
</dbReference>
<dbReference type="InterPro" id="IPR036910">
    <property type="entry name" value="HMG_box_dom_sf"/>
</dbReference>
<dbReference type="InterPro" id="IPR024940">
    <property type="entry name" value="TCF/LEF"/>
</dbReference>
<dbReference type="PANTHER" id="PTHR10373">
    <property type="entry name" value="TRANSCRIPTION FACTOR 7 FAMILY MEMBER"/>
    <property type="match status" value="1"/>
</dbReference>
<dbReference type="PANTHER" id="PTHR10373:SF25">
    <property type="entry name" value="TRANSCRIPTION FACTOR 7-LIKE 1"/>
    <property type="match status" value="1"/>
</dbReference>
<dbReference type="Pfam" id="PF08347">
    <property type="entry name" value="CTNNB1_binding"/>
    <property type="match status" value="1"/>
</dbReference>
<dbReference type="Pfam" id="PF00505">
    <property type="entry name" value="HMG_box"/>
    <property type="match status" value="1"/>
</dbReference>
<dbReference type="SMART" id="SM00398">
    <property type="entry name" value="HMG"/>
    <property type="match status" value="1"/>
</dbReference>
<dbReference type="SUPFAM" id="SSF47095">
    <property type="entry name" value="HMG-box"/>
    <property type="match status" value="1"/>
</dbReference>
<dbReference type="PROSITE" id="PS50118">
    <property type="entry name" value="HMG_BOX_2"/>
    <property type="match status" value="1"/>
</dbReference>
<accession>Q800Q5</accession>
<name>T7L1B_DANRE</name>
<gene>
    <name type="primary">tcf7l1b</name>
    <name type="synonym">tcf3b</name>
</gene>
<sequence length="551" mass="60418">MPQLNGGGGDELGANDEMISFKDEGEQEDKISENVSAERGLDDVKSSLVSESENNSSSSDSEQTERRPQPRADLESYEKAREYFTEALRRQQDGGFFKSPHYPGYPFLMIPDLANPYLSNGALSPSARTYLQMKWPLLDVPGSAALKDSQSPSPGHLSNKVPVVQHAHMHPLTPLITYSNEFPPGTPPAHLSPEILDPKTGIPRTPHPAELSPYYPLSPGTVGQIPHPLGWLVPQQGQHMYPITAGGFRHPYPALAMNASMSSLVSSRFSPHLVPHHPHGLHQTGIPHPAIVSPVIKQEPNGELSPPVNTKSPGPNKKDEDKKPHIKKPLNAFMLYMKEMRAKVVAECTLKENAAINQILGRRWHSLSREEQAKYYELARKERQLHSQLYPGWSARDNYGKRKKRKRDNKTDSTPEDFSMRSKKPCVQYLPQEKMIDSPGSSHGSMLDSPATPSAALASPAAPAATHSEQAQPLSLTTKPERFPLLSKPPPSSSSSSSSSSSSGLPTPPLLSRPLPFALLTPPSPFHQAALHSHHALFQSQPLSLVTKSSD</sequence>